<protein>
    <recommendedName>
        <fullName evidence="1">Phosphate acyltransferase</fullName>
        <ecNumber evidence="1">2.3.1.274</ecNumber>
    </recommendedName>
    <alternativeName>
        <fullName evidence="1">Acyl-ACP phosphotransacylase</fullName>
    </alternativeName>
    <alternativeName>
        <fullName evidence="1">Acyl-[acyl-carrier-protein]--phosphate acyltransferase</fullName>
    </alternativeName>
    <alternativeName>
        <fullName evidence="1">Phosphate-acyl-ACP acyltransferase</fullName>
    </alternativeName>
</protein>
<reference key="1">
    <citation type="journal article" date="2014" name="Stand. Genomic Sci.">
        <title>Complete genome sequence of Anabaena variabilis ATCC 29413.</title>
        <authorList>
            <person name="Thiel T."/>
            <person name="Pratte B.S."/>
            <person name="Zhong J."/>
            <person name="Goodwin L."/>
            <person name="Copeland A."/>
            <person name="Lucas S."/>
            <person name="Han C."/>
            <person name="Pitluck S."/>
            <person name="Land M.L."/>
            <person name="Kyrpides N.C."/>
            <person name="Woyke T."/>
        </authorList>
    </citation>
    <scope>NUCLEOTIDE SEQUENCE [LARGE SCALE GENOMIC DNA]</scope>
    <source>
        <strain>ATCC 29413 / PCC 7937</strain>
    </source>
</reference>
<dbReference type="EC" id="2.3.1.274" evidence="1"/>
<dbReference type="EMBL" id="CP000117">
    <property type="protein sequence ID" value="ABA22341.1"/>
    <property type="molecule type" value="Genomic_DNA"/>
</dbReference>
<dbReference type="SMR" id="Q3M9J5"/>
<dbReference type="STRING" id="240292.Ava_2728"/>
<dbReference type="KEGG" id="ava:Ava_2728"/>
<dbReference type="eggNOG" id="COG0416">
    <property type="taxonomic scope" value="Bacteria"/>
</dbReference>
<dbReference type="HOGENOM" id="CLU_039379_1_1_3"/>
<dbReference type="UniPathway" id="UPA00085"/>
<dbReference type="Proteomes" id="UP000002533">
    <property type="component" value="Chromosome"/>
</dbReference>
<dbReference type="GO" id="GO:0005737">
    <property type="term" value="C:cytoplasm"/>
    <property type="evidence" value="ECO:0007669"/>
    <property type="project" value="UniProtKB-SubCell"/>
</dbReference>
<dbReference type="GO" id="GO:0043811">
    <property type="term" value="F:phosphate:acyl-[acyl carrier protein] acyltransferase activity"/>
    <property type="evidence" value="ECO:0007669"/>
    <property type="project" value="UniProtKB-UniRule"/>
</dbReference>
<dbReference type="GO" id="GO:0006633">
    <property type="term" value="P:fatty acid biosynthetic process"/>
    <property type="evidence" value="ECO:0007669"/>
    <property type="project" value="UniProtKB-UniRule"/>
</dbReference>
<dbReference type="GO" id="GO:0008654">
    <property type="term" value="P:phospholipid biosynthetic process"/>
    <property type="evidence" value="ECO:0007669"/>
    <property type="project" value="UniProtKB-KW"/>
</dbReference>
<dbReference type="Gene3D" id="3.40.718.10">
    <property type="entry name" value="Isopropylmalate Dehydrogenase"/>
    <property type="match status" value="1"/>
</dbReference>
<dbReference type="HAMAP" id="MF_00019">
    <property type="entry name" value="PlsX"/>
    <property type="match status" value="1"/>
</dbReference>
<dbReference type="InterPro" id="IPR003664">
    <property type="entry name" value="FA_synthesis"/>
</dbReference>
<dbReference type="InterPro" id="IPR012281">
    <property type="entry name" value="Phospholipid_synth_PlsX-like"/>
</dbReference>
<dbReference type="NCBIfam" id="TIGR00182">
    <property type="entry name" value="plsX"/>
    <property type="match status" value="1"/>
</dbReference>
<dbReference type="PANTHER" id="PTHR30100">
    <property type="entry name" value="FATTY ACID/PHOSPHOLIPID SYNTHESIS PROTEIN PLSX"/>
    <property type="match status" value="1"/>
</dbReference>
<dbReference type="PANTHER" id="PTHR30100:SF1">
    <property type="entry name" value="PHOSPHATE ACYLTRANSFERASE"/>
    <property type="match status" value="1"/>
</dbReference>
<dbReference type="Pfam" id="PF02504">
    <property type="entry name" value="FA_synthesis"/>
    <property type="match status" value="1"/>
</dbReference>
<dbReference type="PIRSF" id="PIRSF002465">
    <property type="entry name" value="Phsphlp_syn_PlsX"/>
    <property type="match status" value="1"/>
</dbReference>
<dbReference type="SUPFAM" id="SSF53659">
    <property type="entry name" value="Isocitrate/Isopropylmalate dehydrogenase-like"/>
    <property type="match status" value="1"/>
</dbReference>
<comment type="function">
    <text evidence="1">Catalyzes the reversible formation of acyl-phosphate (acyl-PO(4)) from acyl-[acyl-carrier-protein] (acyl-ACP). This enzyme utilizes acyl-ACP as fatty acyl donor, but not acyl-CoA.</text>
</comment>
<comment type="catalytic activity">
    <reaction evidence="1">
        <text>a fatty acyl-[ACP] + phosphate = an acyl phosphate + holo-[ACP]</text>
        <dbReference type="Rhea" id="RHEA:42292"/>
        <dbReference type="Rhea" id="RHEA-COMP:9685"/>
        <dbReference type="Rhea" id="RHEA-COMP:14125"/>
        <dbReference type="ChEBI" id="CHEBI:43474"/>
        <dbReference type="ChEBI" id="CHEBI:59918"/>
        <dbReference type="ChEBI" id="CHEBI:64479"/>
        <dbReference type="ChEBI" id="CHEBI:138651"/>
        <dbReference type="EC" id="2.3.1.274"/>
    </reaction>
</comment>
<comment type="pathway">
    <text evidence="1">Lipid metabolism; phospholipid metabolism.</text>
</comment>
<comment type="subunit">
    <text evidence="1">Homodimer. Probably interacts with PlsY.</text>
</comment>
<comment type="subcellular location">
    <subcellularLocation>
        <location evidence="1">Cytoplasm</location>
    </subcellularLocation>
    <text evidence="1">Associated with the membrane possibly through PlsY.</text>
</comment>
<comment type="similarity">
    <text evidence="1">Belongs to the PlsX family.</text>
</comment>
<organism>
    <name type="scientific">Trichormus variabilis (strain ATCC 29413 / PCC 7937)</name>
    <name type="common">Anabaena variabilis</name>
    <dbReference type="NCBI Taxonomy" id="240292"/>
    <lineage>
        <taxon>Bacteria</taxon>
        <taxon>Bacillati</taxon>
        <taxon>Cyanobacteriota</taxon>
        <taxon>Cyanophyceae</taxon>
        <taxon>Nostocales</taxon>
        <taxon>Nostocaceae</taxon>
        <taxon>Trichormus</taxon>
    </lineage>
</organism>
<keyword id="KW-0963">Cytoplasm</keyword>
<keyword id="KW-0444">Lipid biosynthesis</keyword>
<keyword id="KW-0443">Lipid metabolism</keyword>
<keyword id="KW-0594">Phospholipid biosynthesis</keyword>
<keyword id="KW-1208">Phospholipid metabolism</keyword>
<keyword id="KW-0808">Transferase</keyword>
<feature type="chain" id="PRO_1000001716" description="Phosphate acyltransferase">
    <location>
        <begin position="1"/>
        <end position="342"/>
    </location>
</feature>
<accession>Q3M9J5</accession>
<gene>
    <name evidence="1" type="primary">plsX</name>
    <name type="ordered locus">Ava_2728</name>
</gene>
<name>PLSX_TRIV2</name>
<sequence>MGSTCVRIAIDAMGGDHAPNEIVAGAVRASEELGVKVLLVGDPQQIASALPPKTNLERVEIVPAEEAIAMDEEPLNAVRRKRKASINVAMDLVKREQADAIFSAGHSGAAMASALLRLGRLPGVDRPAIGTVFPTIKAGKPVLILDVGANVDCRPKFLEQFAVIGSIYSQYVLGTGEPPKVGLLNIGEEDTKGNELALRTHQLLKDNPNINFIGNAEGRDVLSGEFDVIVCDGFVGNILLKFAEAIGGVILQILREELPQGLHGQIGTAILKPNLTRIKQRMDHAEHGGALLLGVSGVCLIGHGSSQAPSVFNAIRMAKEAVDNQVMQQLQSQYEILHSASD</sequence>
<evidence type="ECO:0000255" key="1">
    <source>
        <dbReference type="HAMAP-Rule" id="MF_00019"/>
    </source>
</evidence>
<proteinExistence type="inferred from homology"/>